<accession>P85619</accession>
<sequence>EQFEDYGHMRF</sequence>
<protein>
    <recommendedName>
        <fullName evidence="4">Sulfakinin-1</fullName>
        <shortName evidence="4">EubDi-SK-1</shortName>
    </recommendedName>
</protein>
<organism>
    <name type="scientific">Eublaberus distanti</name>
    <name type="common">Four-spotted cockroach</name>
    <dbReference type="NCBI Taxonomy" id="424761"/>
    <lineage>
        <taxon>Eukaryota</taxon>
        <taxon>Metazoa</taxon>
        <taxon>Ecdysozoa</taxon>
        <taxon>Arthropoda</taxon>
        <taxon>Hexapoda</taxon>
        <taxon>Insecta</taxon>
        <taxon>Pterygota</taxon>
        <taxon>Neoptera</taxon>
        <taxon>Polyneoptera</taxon>
        <taxon>Dictyoptera</taxon>
        <taxon>Blattodea</taxon>
        <taxon>Blaberoidea</taxon>
        <taxon>Blaberidae</taxon>
        <taxon>Blaberinae</taxon>
        <taxon>Eublaberus</taxon>
    </lineage>
</organism>
<dbReference type="GO" id="GO:0005576">
    <property type="term" value="C:extracellular region"/>
    <property type="evidence" value="ECO:0007669"/>
    <property type="project" value="UniProtKB-SubCell"/>
</dbReference>
<dbReference type="GO" id="GO:0005179">
    <property type="term" value="F:hormone activity"/>
    <property type="evidence" value="ECO:0007669"/>
    <property type="project" value="UniProtKB-KW"/>
</dbReference>
<dbReference type="GO" id="GO:0007218">
    <property type="term" value="P:neuropeptide signaling pathway"/>
    <property type="evidence" value="ECO:0007669"/>
    <property type="project" value="UniProtKB-KW"/>
</dbReference>
<dbReference type="InterPro" id="IPR013152">
    <property type="entry name" value="Gastrin/cholecystokinin_CS"/>
</dbReference>
<dbReference type="InterPro" id="IPR013259">
    <property type="entry name" value="Sulfakinin"/>
</dbReference>
<dbReference type="Pfam" id="PF08257">
    <property type="entry name" value="Sulfakinin"/>
    <property type="match status" value="1"/>
</dbReference>
<dbReference type="PROSITE" id="PS00259">
    <property type="entry name" value="GASTRIN"/>
    <property type="match status" value="1"/>
</dbReference>
<feature type="peptide" id="PRO_0000378874" description="Sulfakinin-1" evidence="3">
    <location>
        <begin position="1"/>
        <end position="11"/>
    </location>
</feature>
<feature type="modified residue" description="Sulfotyrosine" evidence="1">
    <location>
        <position position="6"/>
    </location>
</feature>
<feature type="modified residue" description="Phenylalanine amide" evidence="3">
    <location>
        <position position="11"/>
    </location>
</feature>
<reference evidence="5" key="1">
    <citation type="journal article" date="2009" name="BMC Evol. Biol.">
        <title>A proteomic approach for studying insect phylogeny: CAPA peptides of ancient insect taxa (Dictyoptera, Blattoptera) as a test case.</title>
        <authorList>
            <person name="Roth S."/>
            <person name="Fromm B."/>
            <person name="Gaede G."/>
            <person name="Predel R."/>
        </authorList>
    </citation>
    <scope>PROTEIN SEQUENCE</scope>
    <scope>AMIDATION AT PHE-11</scope>
    <source>
        <tissue evidence="3">Corpora cardiaca</tissue>
    </source>
</reference>
<comment type="function">
    <text evidence="1">Myotropic peptide.</text>
</comment>
<comment type="subcellular location">
    <subcellularLocation>
        <location evidence="5">Secreted</location>
    </subcellularLocation>
</comment>
<comment type="similarity">
    <text evidence="2">Belongs to the gastrin/cholecystokinin family.</text>
</comment>
<proteinExistence type="evidence at protein level"/>
<keyword id="KW-0027">Amidation</keyword>
<keyword id="KW-0903">Direct protein sequencing</keyword>
<keyword id="KW-0372">Hormone</keyword>
<keyword id="KW-0527">Neuropeptide</keyword>
<keyword id="KW-0964">Secreted</keyword>
<keyword id="KW-0765">Sulfation</keyword>
<evidence type="ECO:0000250" key="1">
    <source>
        <dbReference type="UniProtKB" id="P41493"/>
    </source>
</evidence>
<evidence type="ECO:0000255" key="2"/>
<evidence type="ECO:0000269" key="3">
    <source>
    </source>
</evidence>
<evidence type="ECO:0000303" key="4">
    <source>
    </source>
</evidence>
<evidence type="ECO:0000305" key="5"/>
<name>SK1_EUBDI</name>